<dbReference type="EMBL" id="S77610">
    <property type="protein sequence ID" value="AAB33826.2"/>
    <property type="molecule type" value="Genomic_DNA"/>
</dbReference>
<dbReference type="EMBL" id="S77606">
    <property type="protein sequence ID" value="AAB33826.2"/>
    <property type="status" value="JOINED"/>
    <property type="molecule type" value="Genomic_DNA"/>
</dbReference>
<dbReference type="EMBL" id="U12564">
    <property type="protein sequence ID" value="AAA20977.1"/>
    <property type="molecule type" value="Genomic_DNA"/>
</dbReference>
<dbReference type="EMBL" id="AJ564870">
    <property type="protein sequence ID" value="CAD92332.1"/>
    <property type="molecule type" value="mRNA"/>
</dbReference>
<dbReference type="SMR" id="P50715"/>
<dbReference type="FunCoup" id="P50715">
    <property type="interactions" value="32"/>
</dbReference>
<dbReference type="AGR" id="MGI:102509"/>
<dbReference type="MGI" id="MGI:102509">
    <property type="gene designation" value="Defa31"/>
</dbReference>
<dbReference type="InParanoid" id="P50715"/>
<dbReference type="Reactome" id="R-MMU-1461973">
    <property type="pathway name" value="Defensins"/>
</dbReference>
<dbReference type="Reactome" id="R-MMU-1462054">
    <property type="pathway name" value="Alpha-defensins"/>
</dbReference>
<dbReference type="Reactome" id="R-MMU-6798695">
    <property type="pathway name" value="Neutrophil degranulation"/>
</dbReference>
<dbReference type="PRO" id="PR:P50715"/>
<dbReference type="Proteomes" id="UP000000589">
    <property type="component" value="Unplaced"/>
</dbReference>
<dbReference type="RNAct" id="P50715">
    <property type="molecule type" value="protein"/>
</dbReference>
<dbReference type="GO" id="GO:0005615">
    <property type="term" value="C:extracellular space"/>
    <property type="evidence" value="ECO:0007669"/>
    <property type="project" value="InterPro"/>
</dbReference>
<dbReference type="GO" id="GO:0042802">
    <property type="term" value="F:identical protein binding"/>
    <property type="evidence" value="ECO:0000353"/>
    <property type="project" value="MGI"/>
</dbReference>
<dbReference type="GO" id="GO:0042742">
    <property type="term" value="P:defense response to bacterium"/>
    <property type="evidence" value="ECO:0000314"/>
    <property type="project" value="MGI"/>
</dbReference>
<dbReference type="InterPro" id="IPR016327">
    <property type="entry name" value="Alpha-defensin"/>
</dbReference>
<dbReference type="InterPro" id="IPR002366">
    <property type="entry name" value="Alpha-defensin_N"/>
</dbReference>
<dbReference type="PANTHER" id="PTHR11876">
    <property type="entry name" value="ALPHA-DEFENSIN 1"/>
    <property type="match status" value="1"/>
</dbReference>
<dbReference type="PANTHER" id="PTHR11876:SF2">
    <property type="entry name" value="ALPHA-DEFENSIN 1-RELATED"/>
    <property type="match status" value="1"/>
</dbReference>
<dbReference type="Pfam" id="PF00879">
    <property type="entry name" value="Defensin_propep"/>
    <property type="match status" value="1"/>
</dbReference>
<dbReference type="PIRSF" id="PIRSF001875">
    <property type="entry name" value="Alpha-defensin"/>
    <property type="match status" value="1"/>
</dbReference>
<dbReference type="SMART" id="SM01418">
    <property type="entry name" value="Defensin_propep"/>
    <property type="match status" value="1"/>
</dbReference>
<sequence>MKKLVLLFALVLLAFQVQADSIQNTDEETKTEEQQGEEDQAVSVSFGDPQGSGLQDAALGWGRRCPRCPPCPRCSWCPRCPTCPRCNCNPK</sequence>
<feature type="signal peptide" evidence="1">
    <location>
        <begin position="1"/>
        <end position="19"/>
    </location>
</feature>
<feature type="propeptide" id="PRO_0000006853" evidence="1">
    <location>
        <begin position="20"/>
        <end position="65"/>
    </location>
</feature>
<feature type="peptide" id="PRO_0000006854" description="Alpha-defensin 31">
    <location>
        <begin position="66"/>
        <end position="91"/>
    </location>
</feature>
<feature type="repeat" description="1">
    <location>
        <begin position="65"/>
        <end position="67"/>
    </location>
</feature>
<feature type="repeat" description="2">
    <location>
        <begin position="68"/>
        <end position="70"/>
    </location>
</feature>
<feature type="repeat" description="3">
    <location>
        <begin position="71"/>
        <end position="73"/>
    </location>
</feature>
<feature type="repeat" description="4">
    <location>
        <begin position="77"/>
        <end position="79"/>
    </location>
</feature>
<feature type="repeat" description="5">
    <location>
        <begin position="80"/>
        <end position="82"/>
    </location>
</feature>
<feature type="repeat" description="6">
    <location>
        <begin position="83"/>
        <end position="85"/>
    </location>
</feature>
<feature type="region of interest" description="Disordered" evidence="2">
    <location>
        <begin position="22"/>
        <end position="55"/>
    </location>
</feature>
<feature type="region of interest" description="6 X 3 AA tandem repeats of C-P-X">
    <location>
        <begin position="65"/>
        <end position="85"/>
    </location>
</feature>
<feature type="sequence conflict" description="In Ref. 1; AAA20977." evidence="5" ref="1">
    <original>D</original>
    <variation>DA</variation>
    <location>
        <position position="56"/>
    </location>
</feature>
<gene>
    <name evidence="6" type="primary">Defa31</name>
    <name evidence="6" type="synonym">Defa-rs7</name>
    <name evidence="6" type="synonym">Defcr-rs7</name>
</gene>
<organism>
    <name type="scientific">Mus musculus</name>
    <name type="common">Mouse</name>
    <dbReference type="NCBI Taxonomy" id="10090"/>
    <lineage>
        <taxon>Eukaryota</taxon>
        <taxon>Metazoa</taxon>
        <taxon>Chordata</taxon>
        <taxon>Craniata</taxon>
        <taxon>Vertebrata</taxon>
        <taxon>Euteleostomi</taxon>
        <taxon>Mammalia</taxon>
        <taxon>Eutheria</taxon>
        <taxon>Euarchontoglires</taxon>
        <taxon>Glires</taxon>
        <taxon>Rodentia</taxon>
        <taxon>Myomorpha</taxon>
        <taxon>Muroidea</taxon>
        <taxon>Muridae</taxon>
        <taxon>Murinae</taxon>
        <taxon>Mus</taxon>
        <taxon>Mus</taxon>
    </lineage>
</organism>
<name>DFA31_MOUSE</name>
<evidence type="ECO:0000255" key="1"/>
<evidence type="ECO:0000256" key="2">
    <source>
        <dbReference type="SAM" id="MobiDB-lite"/>
    </source>
</evidence>
<evidence type="ECO:0000269" key="3">
    <source>
    </source>
</evidence>
<evidence type="ECO:0000269" key="4">
    <source>
    </source>
</evidence>
<evidence type="ECO:0000305" key="5"/>
<evidence type="ECO:0000312" key="6">
    <source>
        <dbReference type="MGI" id="MGI:102509"/>
    </source>
</evidence>
<reference key="1">
    <citation type="journal article" date="1994" name="Genomics">
        <title>A family of defensin-like genes codes for diverse cysteine-rich peptides in mouse Paneth cells.</title>
        <authorList>
            <person name="Huttner K.M."/>
            <person name="Ouellette A.J."/>
        </authorList>
    </citation>
    <scope>NUCLEOTIDE SEQUENCE [GENOMIC DNA]</scope>
    <scope>FUNCTION</scope>
    <scope>TISSUE SPECIFICITY</scope>
    <source>
        <strain>129/SvJ</strain>
        <tissue>Small intestine</tissue>
    </source>
</reference>
<reference key="2">
    <citation type="journal article" date="2004" name="Nat. Immunol.">
        <title>Increased diversity of intestinal antimicrobial peptides by covalent dimer formation.</title>
        <authorList>
            <person name="Hornef M.W."/>
            <person name="Putsep K."/>
            <person name="Karlsson J."/>
            <person name="Refai E."/>
            <person name="Andersson M."/>
        </authorList>
    </citation>
    <scope>NUCLEOTIDE SEQUENCE [MRNA]</scope>
    <scope>FUNCTION</scope>
    <source>
        <strain>C3H/HeN</strain>
    </source>
</reference>
<accession>P50715</accession>
<accession>Q64109</accession>
<accession>Q68VH1</accession>
<proteinExistence type="evidence at transcript level"/>
<comment type="function">
    <text evidence="3 4">Apparent precursor of a secreted, cationic, proline- and cysteine-rich peptide that contains Cys-Pro-Xaa repeats (PubMed:7896294). Unlike cryptdin, the proposed mature peptide region lacks the structural motif characteristic of defensins (PubMed:7896294). It may have microbicidal activities (PubMed:15235601).</text>
</comment>
<comment type="subcellular location">
    <subcellularLocation>
        <location>Secreted</location>
    </subcellularLocation>
</comment>
<comment type="tissue specificity">
    <text evidence="4">Paneth cells of the small bowel.</text>
</comment>
<comment type="similarity">
    <text evidence="5">Belongs to the alpha-defensin family.</text>
</comment>
<protein>
    <recommendedName>
        <fullName>Alpha-defensin 31</fullName>
    </recommendedName>
    <alternativeName>
        <fullName>Alpha-defensin-related sequence 7</fullName>
    </alternativeName>
    <alternativeName>
        <fullName>Cryptdin-related protein 4C-2</fullName>
        <shortName evidence="6">CRS4C2</shortName>
    </alternativeName>
    <alternativeName>
        <fullName>Defensin-related cryptdin-related sequence 7</fullName>
    </alternativeName>
</protein>
<keyword id="KW-0929">Antimicrobial</keyword>
<keyword id="KW-0211">Defensin</keyword>
<keyword id="KW-1185">Reference proteome</keyword>
<keyword id="KW-0677">Repeat</keyword>
<keyword id="KW-0964">Secreted</keyword>
<keyword id="KW-0732">Signal</keyword>